<name>APL25_ORYSJ</name>
<keyword id="KW-0238">DNA-binding</keyword>
<keyword id="KW-0539">Nucleus</keyword>
<keyword id="KW-1185">Reference proteome</keyword>
<keyword id="KW-0677">Repeat</keyword>
<keyword id="KW-0804">Transcription</keyword>
<keyword id="KW-0805">Transcription regulation</keyword>
<gene>
    <name evidence="9" type="primary">AP2-5</name>
    <name evidence="8" type="synonym">SHAT1</name>
    <name evidence="10" type="ordered locus">LOC_Os04g55560</name>
    <name evidence="10" type="ordered locus">Os04g0649100</name>
    <name evidence="14" type="ORF">OSJNBa0010D21.13</name>
    <name evidence="13" type="ORF">OSNPB_040649100</name>
</gene>
<proteinExistence type="evidence at transcript level"/>
<accession>A0A0N7KJT8</accession>
<accession>B9FCV0</accession>
<accession>Q7XT53</accession>
<protein>
    <recommendedName>
        <fullName evidence="9">APETALA2-like protein 5</fullName>
    </recommendedName>
    <alternativeName>
        <fullName evidence="8">Protein SHATTERING ABORTION 1</fullName>
    </alternativeName>
</protein>
<dbReference type="EMBL" id="AL606635">
    <property type="protein sequence ID" value="CAE01667.2"/>
    <property type="molecule type" value="Genomic_DNA"/>
</dbReference>
<dbReference type="EMBL" id="AP014960">
    <property type="protein sequence ID" value="BAS91337.1"/>
    <property type="molecule type" value="Genomic_DNA"/>
</dbReference>
<dbReference type="EMBL" id="CM000141">
    <property type="protein sequence ID" value="EEE61805.1"/>
    <property type="status" value="ALT_INIT"/>
    <property type="molecule type" value="Genomic_DNA"/>
</dbReference>
<dbReference type="RefSeq" id="XP_015636848.1">
    <property type="nucleotide sequence ID" value="XM_015781362.1"/>
</dbReference>
<dbReference type="RefSeq" id="XP_015636849.1">
    <property type="nucleotide sequence ID" value="XM_015781363.1"/>
</dbReference>
<dbReference type="SMR" id="A0A0N7KJT8"/>
<dbReference type="FunCoup" id="A0A0N7KJT8">
    <property type="interactions" value="1457"/>
</dbReference>
<dbReference type="STRING" id="39947.A0A0N7KJT8"/>
<dbReference type="PaxDb" id="39947-A0A0N7KJT8"/>
<dbReference type="EnsemblPlants" id="Os04t0649100-03">
    <property type="protein sequence ID" value="Os04t0649100-03"/>
    <property type="gene ID" value="Os04g0649100"/>
</dbReference>
<dbReference type="GeneID" id="9269072"/>
<dbReference type="Gramene" id="Os04t0649100-03">
    <property type="protein sequence ID" value="Os04t0649100-03"/>
    <property type="gene ID" value="Os04g0649100"/>
</dbReference>
<dbReference type="InParanoid" id="A0A0N7KJT8"/>
<dbReference type="OrthoDB" id="207175at2759"/>
<dbReference type="Proteomes" id="UP000000763">
    <property type="component" value="Chromosome 4"/>
</dbReference>
<dbReference type="Proteomes" id="UP000007752">
    <property type="component" value="Chromosome 4"/>
</dbReference>
<dbReference type="Proteomes" id="UP000059680">
    <property type="component" value="Chromosome 4"/>
</dbReference>
<dbReference type="ExpressionAtlas" id="A0A0N7KJT8">
    <property type="expression patterns" value="baseline and differential"/>
</dbReference>
<dbReference type="GO" id="GO:0005634">
    <property type="term" value="C:nucleus"/>
    <property type="evidence" value="ECO:0000314"/>
    <property type="project" value="UniProtKB"/>
</dbReference>
<dbReference type="GO" id="GO:0005667">
    <property type="term" value="C:transcription regulator complex"/>
    <property type="evidence" value="ECO:0000314"/>
    <property type="project" value="UniProtKB"/>
</dbReference>
<dbReference type="GO" id="GO:0003700">
    <property type="term" value="F:DNA-binding transcription factor activity"/>
    <property type="evidence" value="ECO:0000314"/>
    <property type="project" value="UniProtKB"/>
</dbReference>
<dbReference type="GO" id="GO:0000976">
    <property type="term" value="F:transcription cis-regulatory region binding"/>
    <property type="evidence" value="ECO:0000314"/>
    <property type="project" value="UniProtKB"/>
</dbReference>
<dbReference type="GO" id="GO:0060860">
    <property type="term" value="P:regulation of floral organ abscission"/>
    <property type="evidence" value="ECO:0000315"/>
    <property type="project" value="UniProtKB"/>
</dbReference>
<dbReference type="GO" id="GO:0009909">
    <property type="term" value="P:regulation of flower development"/>
    <property type="evidence" value="ECO:0000315"/>
    <property type="project" value="UniProtKB"/>
</dbReference>
<dbReference type="GO" id="GO:0080050">
    <property type="term" value="P:regulation of seed development"/>
    <property type="evidence" value="ECO:0000315"/>
    <property type="project" value="UniProtKB"/>
</dbReference>
<dbReference type="GO" id="GO:0009409">
    <property type="term" value="P:response to cold"/>
    <property type="evidence" value="ECO:0000270"/>
    <property type="project" value="UniProtKB"/>
</dbReference>
<dbReference type="GO" id="GO:0097548">
    <property type="term" value="P:seed abscission"/>
    <property type="evidence" value="ECO:0000315"/>
    <property type="project" value="UniProtKB"/>
</dbReference>
<dbReference type="CDD" id="cd00018">
    <property type="entry name" value="AP2"/>
    <property type="match status" value="1"/>
</dbReference>
<dbReference type="FunFam" id="3.30.730.10:FF:000002">
    <property type="entry name" value="AP2-like ethylene-responsive transcription factor"/>
    <property type="match status" value="1"/>
</dbReference>
<dbReference type="FunFam" id="3.30.730.10:FF:000004">
    <property type="entry name" value="AP2-like ethylene-responsive transcription factor"/>
    <property type="match status" value="1"/>
</dbReference>
<dbReference type="Gene3D" id="3.30.730.10">
    <property type="entry name" value="AP2/ERF domain"/>
    <property type="match status" value="2"/>
</dbReference>
<dbReference type="InterPro" id="IPR001471">
    <property type="entry name" value="AP2/ERF_dom"/>
</dbReference>
<dbReference type="InterPro" id="IPR036955">
    <property type="entry name" value="AP2/ERF_dom_sf"/>
</dbReference>
<dbReference type="InterPro" id="IPR016177">
    <property type="entry name" value="DNA-bd_dom_sf"/>
</dbReference>
<dbReference type="PANTHER" id="PTHR32467">
    <property type="entry name" value="AP2-LIKE ETHYLENE-RESPONSIVE TRANSCRIPTION FACTOR"/>
    <property type="match status" value="1"/>
</dbReference>
<dbReference type="PANTHER" id="PTHR32467:SF142">
    <property type="entry name" value="FLORAL HOMEOTIC PROTEIN APETALA 2"/>
    <property type="match status" value="1"/>
</dbReference>
<dbReference type="Pfam" id="PF00847">
    <property type="entry name" value="AP2"/>
    <property type="match status" value="2"/>
</dbReference>
<dbReference type="SMART" id="SM00380">
    <property type="entry name" value="AP2"/>
    <property type="match status" value="2"/>
</dbReference>
<dbReference type="SUPFAM" id="SSF54171">
    <property type="entry name" value="DNA-binding domain"/>
    <property type="match status" value="2"/>
</dbReference>
<dbReference type="PROSITE" id="PS51032">
    <property type="entry name" value="AP2_ERF"/>
    <property type="match status" value="2"/>
</dbReference>
<organism>
    <name type="scientific">Oryza sativa subsp. japonica</name>
    <name type="common">Rice</name>
    <dbReference type="NCBI Taxonomy" id="39947"/>
    <lineage>
        <taxon>Eukaryota</taxon>
        <taxon>Viridiplantae</taxon>
        <taxon>Streptophyta</taxon>
        <taxon>Embryophyta</taxon>
        <taxon>Tracheophyta</taxon>
        <taxon>Spermatophyta</taxon>
        <taxon>Magnoliopsida</taxon>
        <taxon>Liliopsida</taxon>
        <taxon>Poales</taxon>
        <taxon>Poaceae</taxon>
        <taxon>BOP clade</taxon>
        <taxon>Oryzoideae</taxon>
        <taxon>Oryzeae</taxon>
        <taxon>Oryzinae</taxon>
        <taxon>Oryza</taxon>
        <taxon>Oryza sativa</taxon>
    </lineage>
</organism>
<reference key="1">
    <citation type="journal article" date="2002" name="Nature">
        <title>Sequence and analysis of rice chromosome 4.</title>
        <authorList>
            <person name="Feng Q."/>
            <person name="Zhang Y."/>
            <person name="Hao P."/>
            <person name="Wang S."/>
            <person name="Fu G."/>
            <person name="Huang Y."/>
            <person name="Li Y."/>
            <person name="Zhu J."/>
            <person name="Liu Y."/>
            <person name="Hu X."/>
            <person name="Jia P."/>
            <person name="Zhang Y."/>
            <person name="Zhao Q."/>
            <person name="Ying K."/>
            <person name="Yu S."/>
            <person name="Tang Y."/>
            <person name="Weng Q."/>
            <person name="Zhang L."/>
            <person name="Lu Y."/>
            <person name="Mu J."/>
            <person name="Lu Y."/>
            <person name="Zhang L.S."/>
            <person name="Yu Z."/>
            <person name="Fan D."/>
            <person name="Liu X."/>
            <person name="Lu T."/>
            <person name="Li C."/>
            <person name="Wu Y."/>
            <person name="Sun T."/>
            <person name="Lei H."/>
            <person name="Li T."/>
            <person name="Hu H."/>
            <person name="Guan J."/>
            <person name="Wu M."/>
            <person name="Zhang R."/>
            <person name="Zhou B."/>
            <person name="Chen Z."/>
            <person name="Chen L."/>
            <person name="Jin Z."/>
            <person name="Wang R."/>
            <person name="Yin H."/>
            <person name="Cai Z."/>
            <person name="Ren S."/>
            <person name="Lv G."/>
            <person name="Gu W."/>
            <person name="Zhu G."/>
            <person name="Tu Y."/>
            <person name="Jia J."/>
            <person name="Zhang Y."/>
            <person name="Chen J."/>
            <person name="Kang H."/>
            <person name="Chen X."/>
            <person name="Shao C."/>
            <person name="Sun Y."/>
            <person name="Hu Q."/>
            <person name="Zhang X."/>
            <person name="Zhang W."/>
            <person name="Wang L."/>
            <person name="Ding C."/>
            <person name="Sheng H."/>
            <person name="Gu J."/>
            <person name="Chen S."/>
            <person name="Ni L."/>
            <person name="Zhu F."/>
            <person name="Chen W."/>
            <person name="Lan L."/>
            <person name="Lai Y."/>
            <person name="Cheng Z."/>
            <person name="Gu M."/>
            <person name="Jiang J."/>
            <person name="Li J."/>
            <person name="Hong G."/>
            <person name="Xue Y."/>
            <person name="Han B."/>
        </authorList>
    </citation>
    <scope>NUCLEOTIDE SEQUENCE [LARGE SCALE GENOMIC DNA]</scope>
    <source>
        <strain>cv. Nipponbare</strain>
    </source>
</reference>
<reference key="2">
    <citation type="journal article" date="2005" name="Nature">
        <title>The map-based sequence of the rice genome.</title>
        <authorList>
            <consortium name="International rice genome sequencing project (IRGSP)"/>
        </authorList>
    </citation>
    <scope>NUCLEOTIDE SEQUENCE [LARGE SCALE GENOMIC DNA]</scope>
    <source>
        <strain>cv. Nipponbare</strain>
    </source>
</reference>
<reference key="3">
    <citation type="journal article" date="2013" name="Rice">
        <title>Improvement of the Oryza sativa Nipponbare reference genome using next generation sequence and optical map data.</title>
        <authorList>
            <person name="Kawahara Y."/>
            <person name="de la Bastide M."/>
            <person name="Hamilton J.P."/>
            <person name="Kanamori H."/>
            <person name="McCombie W.R."/>
            <person name="Ouyang S."/>
            <person name="Schwartz D.C."/>
            <person name="Tanaka T."/>
            <person name="Wu J."/>
            <person name="Zhou S."/>
            <person name="Childs K.L."/>
            <person name="Davidson R.M."/>
            <person name="Lin H."/>
            <person name="Quesada-Ocampo L."/>
            <person name="Vaillancourt B."/>
            <person name="Sakai H."/>
            <person name="Lee S.S."/>
            <person name="Kim J."/>
            <person name="Numa H."/>
            <person name="Itoh T."/>
            <person name="Buell C.R."/>
            <person name="Matsumoto T."/>
        </authorList>
    </citation>
    <scope>GENOME REANNOTATION</scope>
    <source>
        <strain>cv. Nipponbare</strain>
    </source>
</reference>
<reference key="4">
    <citation type="journal article" date="2005" name="PLoS Biol.">
        <title>The genomes of Oryza sativa: a history of duplications.</title>
        <authorList>
            <person name="Yu J."/>
            <person name="Wang J."/>
            <person name="Lin W."/>
            <person name="Li S."/>
            <person name="Li H."/>
            <person name="Zhou J."/>
            <person name="Ni P."/>
            <person name="Dong W."/>
            <person name="Hu S."/>
            <person name="Zeng C."/>
            <person name="Zhang J."/>
            <person name="Zhang Y."/>
            <person name="Li R."/>
            <person name="Xu Z."/>
            <person name="Li S."/>
            <person name="Li X."/>
            <person name="Zheng H."/>
            <person name="Cong L."/>
            <person name="Lin L."/>
            <person name="Yin J."/>
            <person name="Geng J."/>
            <person name="Li G."/>
            <person name="Shi J."/>
            <person name="Liu J."/>
            <person name="Lv H."/>
            <person name="Li J."/>
            <person name="Wang J."/>
            <person name="Deng Y."/>
            <person name="Ran L."/>
            <person name="Shi X."/>
            <person name="Wang X."/>
            <person name="Wu Q."/>
            <person name="Li C."/>
            <person name="Ren X."/>
            <person name="Wang J."/>
            <person name="Wang X."/>
            <person name="Li D."/>
            <person name="Liu D."/>
            <person name="Zhang X."/>
            <person name="Ji Z."/>
            <person name="Zhao W."/>
            <person name="Sun Y."/>
            <person name="Zhang Z."/>
            <person name="Bao J."/>
            <person name="Han Y."/>
            <person name="Dong L."/>
            <person name="Ji J."/>
            <person name="Chen P."/>
            <person name="Wu S."/>
            <person name="Liu J."/>
            <person name="Xiao Y."/>
            <person name="Bu D."/>
            <person name="Tan J."/>
            <person name="Yang L."/>
            <person name="Ye C."/>
            <person name="Zhang J."/>
            <person name="Xu J."/>
            <person name="Zhou Y."/>
            <person name="Yu Y."/>
            <person name="Zhang B."/>
            <person name="Zhuang S."/>
            <person name="Wei H."/>
            <person name="Liu B."/>
            <person name="Lei M."/>
            <person name="Yu H."/>
            <person name="Li Y."/>
            <person name="Xu H."/>
            <person name="Wei S."/>
            <person name="He X."/>
            <person name="Fang L."/>
            <person name="Zhang Z."/>
            <person name="Zhang Y."/>
            <person name="Huang X."/>
            <person name="Su Z."/>
            <person name="Tong W."/>
            <person name="Li J."/>
            <person name="Tong Z."/>
            <person name="Li S."/>
            <person name="Ye J."/>
            <person name="Wang L."/>
            <person name="Fang L."/>
            <person name="Lei T."/>
            <person name="Chen C.-S."/>
            <person name="Chen H.-C."/>
            <person name="Xu Z."/>
            <person name="Li H."/>
            <person name="Huang H."/>
            <person name="Zhang F."/>
            <person name="Xu H."/>
            <person name="Li N."/>
            <person name="Zhao C."/>
            <person name="Li S."/>
            <person name="Dong L."/>
            <person name="Huang Y."/>
            <person name="Li L."/>
            <person name="Xi Y."/>
            <person name="Qi Q."/>
            <person name="Li W."/>
            <person name="Zhang B."/>
            <person name="Hu W."/>
            <person name="Zhang Y."/>
            <person name="Tian X."/>
            <person name="Jiao Y."/>
            <person name="Liang X."/>
            <person name="Jin J."/>
            <person name="Gao L."/>
            <person name="Zheng W."/>
            <person name="Hao B."/>
            <person name="Liu S.-M."/>
            <person name="Wang W."/>
            <person name="Yuan L."/>
            <person name="Cao M."/>
            <person name="McDermott J."/>
            <person name="Samudrala R."/>
            <person name="Wang J."/>
            <person name="Wong G.K.-S."/>
            <person name="Yang H."/>
        </authorList>
    </citation>
    <scope>NUCLEOTIDE SEQUENCE [LARGE SCALE GENOMIC DNA]</scope>
    <source>
        <strain>cv. Nipponbare</strain>
    </source>
</reference>
<reference key="5">
    <citation type="journal article" date="2012" name="Plant Cell">
        <title>Genetic control of seed shattering in rice by the APETALA2 transcription factor shattering abortion1.</title>
        <authorList>
            <person name="Zhou Y."/>
            <person name="Lu D."/>
            <person name="Li C."/>
            <person name="Luo J."/>
            <person name="Zhu B.-F."/>
            <person name="Zhu J."/>
            <person name="Shangguan Y."/>
            <person name="Wang Z."/>
            <person name="Sang T."/>
            <person name="Zhou B."/>
            <person name="Han B."/>
        </authorList>
    </citation>
    <scope>FUNCTION</scope>
    <scope>DISRUPTION PHENOTYPE</scope>
    <scope>TISSUE SPECIFICITY</scope>
    <scope>SUBCELLULAR LOCATION</scope>
    <scope>DEVELOPMENTAL STAGE</scope>
    <source>
        <strain>cv. Huayong</strain>
    </source>
</reference>
<reference key="6">
    <citation type="journal article" date="2014" name="Plant J.">
        <title>The BEL1-type homeobox gene SH5 induces seed shattering by enhancing abscission-zone development and inhibiting lignin biosynthesis.</title>
        <authorList>
            <person name="Yoon J."/>
            <person name="Cho L.-H."/>
            <person name="Kim S.L."/>
            <person name="Choi H."/>
            <person name="Koh H.-J."/>
            <person name="An G."/>
        </authorList>
    </citation>
    <scope>INDUCTION BY SH5 AND COLD</scope>
    <scope>TISSUE SPECIFICITY</scope>
    <source>
        <strain>cv. Dongjin</strain>
    </source>
</reference>
<reference key="7">
    <citation type="journal article" date="2015" name="Proc. Natl. Acad. Sci. U.S.A.">
        <title>Coordinated regulation of vegetative and reproductive branching in rice.</title>
        <authorList>
            <person name="Wang L."/>
            <person name="Sun S."/>
            <person name="Jin J."/>
            <person name="Fu D."/>
            <person name="Yang X."/>
            <person name="Weng X."/>
            <person name="Xu C."/>
            <person name="Li X."/>
            <person name="Xiao J."/>
            <person name="Zhang Q."/>
        </authorList>
    </citation>
    <scope>FUNCTION</scope>
    <scope>REPRESSION BY MIR172</scope>
</reference>
<reference key="8">
    <citation type="journal article" date="2016" name="Front. Plant Sci.">
        <title>OsMADS1 represses microRNA172 in elongation of palea/lemma development in rice.</title>
        <authorList>
            <person name="Dai Z."/>
            <person name="Wang J."/>
            <person name="Zhu M."/>
            <person name="Miao X."/>
            <person name="Shi Z."/>
        </authorList>
    </citation>
    <scope>FUNCTION</scope>
    <scope>REPRESSION BY MIR172</scope>
    <scope>GENE FAMILY</scope>
    <scope>NOMENCLATURE</scope>
    <source>
        <strain>cv. Zhonghua 11</strain>
    </source>
</reference>
<sequence length="460" mass="48500">MWDLNDSPAAEAAPPPLSPSADDSGASSSSAAAVVEIPDDADDDSAAVVVVTRQFFPPAVPGGGGDPAPGNARAGWLRLAGAAPPVAATGPAASAAVSKKSRRGPRSRSSQYRGVTFYRRTGRWESHIWDCGKQVYLGGFDTAHAAARAYDRAAIKFRGVEADINFSLEDYEDDLKQMSNLTKEEFVHVLRRQSTGFPRGSSKYRGVTLHKCGRWEARMGQFLGKKYVYLGLFDTEEEAARAYDRAAIKCNGKDAVTNFDPSIYAGEFEPPAAATGDAAEHNLDLSLGSSAGSKRGNVDGGGDDEITGGGGGGAGSDQRVPMAFDLDWQTAAARSTKAKFDQNSNHPQMPPVLQVTHLPFSPRHHHQFLSNGDPGTAGGLSLTIGAGMAGHWPPQQQQGWGNAGGMSWPHPPHPPPPPTNAAAAATATAAAASSRFPPYIATQASTWLQKNGFHSLTRPT</sequence>
<evidence type="ECO:0000250" key="1">
    <source>
        <dbReference type="UniProtKB" id="P47927"/>
    </source>
</evidence>
<evidence type="ECO:0000255" key="2"/>
<evidence type="ECO:0000255" key="3">
    <source>
        <dbReference type="PROSITE-ProRule" id="PRU00366"/>
    </source>
</evidence>
<evidence type="ECO:0000256" key="4">
    <source>
        <dbReference type="SAM" id="MobiDB-lite"/>
    </source>
</evidence>
<evidence type="ECO:0000269" key="5">
    <source>
    </source>
</evidence>
<evidence type="ECO:0000269" key="6">
    <source>
    </source>
</evidence>
<evidence type="ECO:0000269" key="7">
    <source>
    </source>
</evidence>
<evidence type="ECO:0000303" key="8">
    <source>
    </source>
</evidence>
<evidence type="ECO:0000303" key="9">
    <source>
    </source>
</evidence>
<evidence type="ECO:0000305" key="10"/>
<evidence type="ECO:0000305" key="11">
    <source>
    </source>
</evidence>
<evidence type="ECO:0000305" key="12">
    <source>
    </source>
</evidence>
<evidence type="ECO:0000312" key="13">
    <source>
        <dbReference type="EMBL" id="BAS91337.1"/>
    </source>
</evidence>
<evidence type="ECO:0000312" key="14">
    <source>
        <dbReference type="EMBL" id="CAE01667.2"/>
    </source>
</evidence>
<feature type="chain" id="PRO_0000445995" description="APETALA2-like protein 5">
    <location>
        <begin position="1"/>
        <end position="460"/>
    </location>
</feature>
<feature type="DNA-binding region" description="AP2/ERF 1" evidence="3">
    <location>
        <begin position="111"/>
        <end position="167"/>
    </location>
</feature>
<feature type="DNA-binding region" description="AP2/ERF 2" evidence="3">
    <location>
        <begin position="203"/>
        <end position="260"/>
    </location>
</feature>
<feature type="region of interest" description="Disordered" evidence="4">
    <location>
        <begin position="1"/>
        <end position="39"/>
    </location>
</feature>
<feature type="region of interest" description="Disordered" evidence="4">
    <location>
        <begin position="87"/>
        <end position="111"/>
    </location>
</feature>
<feature type="region of interest" description="Disordered" evidence="4">
    <location>
        <begin position="284"/>
        <end position="319"/>
    </location>
</feature>
<feature type="region of interest" description="Disordered" evidence="4">
    <location>
        <begin position="398"/>
        <end position="429"/>
    </location>
</feature>
<feature type="short sequence motif" description="Nuclear localization signal" evidence="2">
    <location>
        <begin position="99"/>
        <end position="108"/>
    </location>
</feature>
<feature type="short sequence motif" description="EAR" evidence="1">
    <location>
        <begin position="283"/>
        <end position="287"/>
    </location>
</feature>
<feature type="compositionally biased region" description="Low complexity" evidence="4">
    <location>
        <begin position="1"/>
        <end position="12"/>
    </location>
</feature>
<feature type="compositionally biased region" description="Low complexity" evidence="4">
    <location>
        <begin position="19"/>
        <end position="36"/>
    </location>
</feature>
<feature type="compositionally biased region" description="Low complexity" evidence="4">
    <location>
        <begin position="87"/>
        <end position="98"/>
    </location>
</feature>
<feature type="compositionally biased region" description="Pro residues" evidence="4">
    <location>
        <begin position="409"/>
        <end position="419"/>
    </location>
</feature>
<feature type="compositionally biased region" description="Low complexity" evidence="4">
    <location>
        <begin position="420"/>
        <end position="429"/>
    </location>
</feature>
<feature type="sequence conflict" description="In Ref. 1; CAE01667." evidence="10" ref="1">
    <location>
        <position position="272"/>
    </location>
</feature>
<comment type="function">
    <text evidence="5 7 11">Transcription factor (PubMed:22408071). Involved in spikelet transition and development (Probable) (PubMed:22408071). Prevents lemma and palea elongation as well as grain growth (PubMed:22408071, PubMed:28066457). Required for seed shattering through specifying abscission zone (AZ) development (PubMed:22408071).</text>
</comment>
<comment type="subunit">
    <text evidence="1">May form homodimer.</text>
</comment>
<comment type="subcellular location">
    <subcellularLocation>
        <location evidence="3 5">Nucleus</location>
    </subcellularLocation>
</comment>
<comment type="tissue specificity">
    <text evidence="5 6">Expressed in seedlings, leaves, stems, nodes, sheaths, panicles and young spikelets (PubMed:22408071). Accumulates in the spikelet abscission zone (AZ) via a positive regulation by the transcription factors SH4 and SH5 (PubMed:22408071, PubMed:24923192).</text>
</comment>
<comment type="developmental stage">
    <text evidence="5">In developing panicles, highly expressed in the spikelet abscission zone (AZ) and the inner floral organs of 2 mm long spikelets. Later present at weak levels in the apiculus as well as in the palea and lemma to progressively fades out in 8 mm long spikelets.</text>
</comment>
<comment type="induction">
    <text evidence="6 11 12">Target of miR172 microRNA mediated cleavage, particularly during floral organ development (Probable). Induced by SH5 in spikelets abscission zones (AZ). Triggered by cold stress (PubMed:24923192).</text>
</comment>
<comment type="disruption phenotype">
    <text evidence="5">Several spikelet and inflorescence developmental defects, including altered florets palea and lemma structures, abnormal numbers, size, appearance, and identities of floral organs, reduced primary branches number, and longer and fewer grains associated with a loss of grain shattering. Crook-neck-like rachilla between the sterile lemmas and the rudimentary glumes in place of the spikelet abscission zone (AZ).</text>
</comment>
<comment type="similarity">
    <text evidence="10">Belongs to the AP2/ERF transcription factor family. AP2 subfamily.</text>
</comment>
<comment type="sequence caution" evidence="10">
    <conflict type="erroneous initiation">
        <sequence resource="EMBL-CDS" id="EEE61805"/>
    </conflict>
    <text>Extended N-terminus.</text>
</comment>